<evidence type="ECO:0000255" key="1">
    <source>
        <dbReference type="HAMAP-Rule" id="MF_00099"/>
    </source>
</evidence>
<proteinExistence type="inferred from homology"/>
<comment type="function">
    <text evidence="1">Involved in chemotaxis. Part of a chemotaxis signal transduction system that modulates chemotaxis in response to various stimuli. Catalyzes the demethylation of specific methylglutamate residues introduced into the chemoreceptors (methyl-accepting chemotaxis proteins or MCP) by CheR. Also mediates the irreversible deamidation of specific glutamine residues to glutamic acid.</text>
</comment>
<comment type="catalytic activity">
    <reaction evidence="1">
        <text>[protein]-L-glutamate 5-O-methyl ester + H2O = L-glutamyl-[protein] + methanol + H(+)</text>
        <dbReference type="Rhea" id="RHEA:23236"/>
        <dbReference type="Rhea" id="RHEA-COMP:10208"/>
        <dbReference type="Rhea" id="RHEA-COMP:10311"/>
        <dbReference type="ChEBI" id="CHEBI:15377"/>
        <dbReference type="ChEBI" id="CHEBI:15378"/>
        <dbReference type="ChEBI" id="CHEBI:17790"/>
        <dbReference type="ChEBI" id="CHEBI:29973"/>
        <dbReference type="ChEBI" id="CHEBI:82795"/>
        <dbReference type="EC" id="3.1.1.61"/>
    </reaction>
</comment>
<comment type="catalytic activity">
    <reaction evidence="1">
        <text>L-glutaminyl-[protein] + H2O = L-glutamyl-[protein] + NH4(+)</text>
        <dbReference type="Rhea" id="RHEA:16441"/>
        <dbReference type="Rhea" id="RHEA-COMP:10207"/>
        <dbReference type="Rhea" id="RHEA-COMP:10208"/>
        <dbReference type="ChEBI" id="CHEBI:15377"/>
        <dbReference type="ChEBI" id="CHEBI:28938"/>
        <dbReference type="ChEBI" id="CHEBI:29973"/>
        <dbReference type="ChEBI" id="CHEBI:30011"/>
        <dbReference type="EC" id="3.5.1.44"/>
    </reaction>
</comment>
<comment type="subcellular location">
    <subcellularLocation>
        <location evidence="1">Cytoplasm</location>
    </subcellularLocation>
</comment>
<comment type="domain">
    <text evidence="1">Contains a C-terminal catalytic domain, and an N-terminal region which modulates catalytic activity.</text>
</comment>
<comment type="PTM">
    <text evidence="1">Phosphorylated by CheA. Phosphorylation of the N-terminal regulatory domain activates the methylesterase activity.</text>
</comment>
<comment type="similarity">
    <text evidence="1">Belongs to the CheB family.</text>
</comment>
<accession>Q5L0L0</accession>
<protein>
    <recommendedName>
        <fullName evidence="1">Protein-glutamate methylesterase/protein-glutamine glutaminase</fullName>
        <ecNumber evidence="1">3.1.1.61</ecNumber>
        <ecNumber evidence="1">3.5.1.44</ecNumber>
    </recommendedName>
</protein>
<name>CHEB_GEOKA</name>
<gene>
    <name evidence="1" type="primary">cheB</name>
    <name type="ordered locus">GK1241</name>
</gene>
<reference key="1">
    <citation type="journal article" date="2004" name="Nucleic Acids Res.">
        <title>Thermoadaptation trait revealed by the genome sequence of thermophilic Geobacillus kaustophilus.</title>
        <authorList>
            <person name="Takami H."/>
            <person name="Takaki Y."/>
            <person name="Chee G.-J."/>
            <person name="Nishi S."/>
            <person name="Shimamura S."/>
            <person name="Suzuki H."/>
            <person name="Matsui S."/>
            <person name="Uchiyama I."/>
        </authorList>
    </citation>
    <scope>NUCLEOTIDE SEQUENCE [LARGE SCALE GENOMIC DNA]</scope>
    <source>
        <strain>HTA426</strain>
    </source>
</reference>
<feature type="chain" id="PRO_0000225461" description="Protein-glutamate methylesterase/protein-glutamine glutaminase">
    <location>
        <begin position="1"/>
        <end position="349"/>
    </location>
</feature>
<feature type="domain" description="Response regulatory" evidence="1">
    <location>
        <begin position="5"/>
        <end position="122"/>
    </location>
</feature>
<feature type="domain" description="CheB-type methylesterase" evidence="1">
    <location>
        <begin position="156"/>
        <end position="349"/>
    </location>
</feature>
<feature type="active site" evidence="1">
    <location>
        <position position="168"/>
    </location>
</feature>
<feature type="active site" evidence="1">
    <location>
        <position position="195"/>
    </location>
</feature>
<feature type="active site" evidence="1">
    <location>
        <position position="291"/>
    </location>
</feature>
<feature type="modified residue" description="4-aspartylphosphate" evidence="1">
    <location>
        <position position="56"/>
    </location>
</feature>
<sequence>MKTIKVLVVDDSAFMRKWISDFLSEHPRLEVIGTARNGREALEKIAALRPDVVTLDVEMPVMNGLETLQRIMRDHPVPVVMVSSTTTEGAENTIAAMQYGAVDFVAKPSGPISLDLYKVKDEMIGKVLHASEANVAALTAPRRQHPSWRPSFKAAARPQQAIVAIGTSTGGPRALETVLTQLPPDLAAPVVAVQHMPKGFTTSLANRLDALAAITVKEAEDGEVLQNGTAYIAPGGVHLIVREEGGALKARFDESPPRAGHRPAVDVLFESLAAIRLCRKIAVIMTGMGSDGTAGLKKLKESGNTKAIAEARETAVVFGMPRAAIEAGVVDVIVPLDSIAAAIVQLIGE</sequence>
<keyword id="KW-0145">Chemotaxis</keyword>
<keyword id="KW-0963">Cytoplasm</keyword>
<keyword id="KW-0378">Hydrolase</keyword>
<keyword id="KW-0597">Phosphoprotein</keyword>
<keyword id="KW-1185">Reference proteome</keyword>
<organism>
    <name type="scientific">Geobacillus kaustophilus (strain HTA426)</name>
    <dbReference type="NCBI Taxonomy" id="235909"/>
    <lineage>
        <taxon>Bacteria</taxon>
        <taxon>Bacillati</taxon>
        <taxon>Bacillota</taxon>
        <taxon>Bacilli</taxon>
        <taxon>Bacillales</taxon>
        <taxon>Anoxybacillaceae</taxon>
        <taxon>Geobacillus</taxon>
        <taxon>Geobacillus thermoleovorans group</taxon>
    </lineage>
</organism>
<dbReference type="EC" id="3.1.1.61" evidence="1"/>
<dbReference type="EC" id="3.5.1.44" evidence="1"/>
<dbReference type="EMBL" id="BA000043">
    <property type="protein sequence ID" value="BAD75526.1"/>
    <property type="molecule type" value="Genomic_DNA"/>
</dbReference>
<dbReference type="RefSeq" id="WP_011230741.1">
    <property type="nucleotide sequence ID" value="NC_006510.1"/>
</dbReference>
<dbReference type="SMR" id="Q5L0L0"/>
<dbReference type="STRING" id="235909.GK1241"/>
<dbReference type="KEGG" id="gka:GK1241"/>
<dbReference type="PATRIC" id="fig|235909.7.peg.1341"/>
<dbReference type="eggNOG" id="COG2201">
    <property type="taxonomic scope" value="Bacteria"/>
</dbReference>
<dbReference type="HOGENOM" id="CLU_000445_51_0_9"/>
<dbReference type="Proteomes" id="UP000001172">
    <property type="component" value="Chromosome"/>
</dbReference>
<dbReference type="GO" id="GO:0005737">
    <property type="term" value="C:cytoplasm"/>
    <property type="evidence" value="ECO:0007669"/>
    <property type="project" value="UniProtKB-SubCell"/>
</dbReference>
<dbReference type="GO" id="GO:0000156">
    <property type="term" value="F:phosphorelay response regulator activity"/>
    <property type="evidence" value="ECO:0007669"/>
    <property type="project" value="InterPro"/>
</dbReference>
<dbReference type="GO" id="GO:0008984">
    <property type="term" value="F:protein-glutamate methylesterase activity"/>
    <property type="evidence" value="ECO:0007669"/>
    <property type="project" value="UniProtKB-UniRule"/>
</dbReference>
<dbReference type="GO" id="GO:0050568">
    <property type="term" value="F:protein-glutamine glutaminase activity"/>
    <property type="evidence" value="ECO:0007669"/>
    <property type="project" value="UniProtKB-UniRule"/>
</dbReference>
<dbReference type="GO" id="GO:0006935">
    <property type="term" value="P:chemotaxis"/>
    <property type="evidence" value="ECO:0007669"/>
    <property type="project" value="UniProtKB-UniRule"/>
</dbReference>
<dbReference type="CDD" id="cd16432">
    <property type="entry name" value="CheB_Rec"/>
    <property type="match status" value="1"/>
</dbReference>
<dbReference type="CDD" id="cd17541">
    <property type="entry name" value="REC_CheB-like"/>
    <property type="match status" value="1"/>
</dbReference>
<dbReference type="Gene3D" id="3.40.50.2300">
    <property type="match status" value="1"/>
</dbReference>
<dbReference type="Gene3D" id="3.40.50.180">
    <property type="entry name" value="Methylesterase CheB, C-terminal domain"/>
    <property type="match status" value="1"/>
</dbReference>
<dbReference type="HAMAP" id="MF_00099">
    <property type="entry name" value="CheB_chemtxs"/>
    <property type="match status" value="1"/>
</dbReference>
<dbReference type="InterPro" id="IPR008248">
    <property type="entry name" value="CheB-like"/>
</dbReference>
<dbReference type="InterPro" id="IPR035909">
    <property type="entry name" value="CheB_C"/>
</dbReference>
<dbReference type="InterPro" id="IPR011006">
    <property type="entry name" value="CheY-like_superfamily"/>
</dbReference>
<dbReference type="InterPro" id="IPR000673">
    <property type="entry name" value="Sig_transdc_resp-reg_Me-estase"/>
</dbReference>
<dbReference type="InterPro" id="IPR001789">
    <property type="entry name" value="Sig_transdc_resp-reg_receiver"/>
</dbReference>
<dbReference type="NCBIfam" id="NF001965">
    <property type="entry name" value="PRK00742.1"/>
    <property type="match status" value="1"/>
</dbReference>
<dbReference type="NCBIfam" id="NF009206">
    <property type="entry name" value="PRK12555.1"/>
    <property type="match status" value="1"/>
</dbReference>
<dbReference type="PANTHER" id="PTHR42872">
    <property type="entry name" value="PROTEIN-GLUTAMATE METHYLESTERASE/PROTEIN-GLUTAMINE GLUTAMINASE"/>
    <property type="match status" value="1"/>
</dbReference>
<dbReference type="PANTHER" id="PTHR42872:SF3">
    <property type="entry name" value="PROTEIN-GLUTAMATE METHYLESTERASE_PROTEIN-GLUTAMINE GLUTAMINASE 1"/>
    <property type="match status" value="1"/>
</dbReference>
<dbReference type="Pfam" id="PF01339">
    <property type="entry name" value="CheB_methylest"/>
    <property type="match status" value="1"/>
</dbReference>
<dbReference type="Pfam" id="PF00072">
    <property type="entry name" value="Response_reg"/>
    <property type="match status" value="1"/>
</dbReference>
<dbReference type="PIRSF" id="PIRSF000876">
    <property type="entry name" value="RR_chemtxs_CheB"/>
    <property type="match status" value="1"/>
</dbReference>
<dbReference type="SMART" id="SM00448">
    <property type="entry name" value="REC"/>
    <property type="match status" value="1"/>
</dbReference>
<dbReference type="SUPFAM" id="SSF52172">
    <property type="entry name" value="CheY-like"/>
    <property type="match status" value="1"/>
</dbReference>
<dbReference type="SUPFAM" id="SSF52738">
    <property type="entry name" value="Methylesterase CheB, C-terminal domain"/>
    <property type="match status" value="1"/>
</dbReference>
<dbReference type="PROSITE" id="PS50122">
    <property type="entry name" value="CHEB"/>
    <property type="match status" value="1"/>
</dbReference>
<dbReference type="PROSITE" id="PS50110">
    <property type="entry name" value="RESPONSE_REGULATORY"/>
    <property type="match status" value="1"/>
</dbReference>